<accession>Q68RJ5</accession>
<proteinExistence type="evidence at protein level"/>
<gene>
    <name type="primary">IFT81</name>
    <name type="ORF">CHLREDRAFT_138649</name>
</gene>
<sequence length="683" mass="77073">MGDVSYIVDSLGLPPFSYQMSLLSFTEKGPQELLQLLSDVFSTISPKHQKVDVAKEVPDQTADRLIGFLKIIKYRPNVQDPLLFRQLVAAGDRETLYQILRWVVPQAQLLEKRAFVGYYLSFPDMPEEFNFDPDIMELKEEIKAMQQEFIELHKSSDAIKTLSKDTQALKNKIKSLEEEKERLGEKVERAKGAVDKLPDRSSYMEVCTNLRKQQDEEVNLSTAIQTQRALQEKAEASYHRAAARLRELQTSYQEGSAGKLLETLNEDVKNLRAQVNERYPKEVEKRQKRQAALSEALASGISTEMDLQRLQHQATALHNQITEIQERKVAQDKARQGDKAYLQLRQAQQMATVSARKKEELGAKQERLQEKKTALTAQLDKLNAEGGGSGAVFSEEEWRTKYESMKSKLPIYKKMKKELGDLEAEVFVLAHTEELLASQEGGLLEKVKRLEKQQGISGFTETAQHLEKVSEAKSQMDEEKGMTLIEISRTVEEINNAINQRKQQLAPQIKKLRSVRQDFAEFEAKYLEKKTAYDNVVATFEARTSALEGEVSGLKAEVSENETKYHMLHCQLHITDQNIKKVTSGPAAERLRDKYEAKVKEAEDSTKALRDRQREIKDTHSTGLSQIDIMNDMLRLLQLKLNLARGIAVDMSQYGGGGGAAGGANGGMAGQTYDTGSANVLQL</sequence>
<name>IFT81_CHLRE</name>
<keyword id="KW-0002">3D-structure</keyword>
<keyword id="KW-0966">Cell projection</keyword>
<keyword id="KW-0969">Cilium</keyword>
<keyword id="KW-0970">Cilium biogenesis/degradation</keyword>
<keyword id="KW-0175">Coiled coil</keyword>
<dbReference type="EMBL" id="AY615519">
    <property type="protein sequence ID" value="AAT99262.1"/>
    <property type="molecule type" value="mRNA"/>
</dbReference>
<dbReference type="EMBL" id="DS496139">
    <property type="protein sequence ID" value="EDP00479.1"/>
    <property type="molecule type" value="Genomic_DNA"/>
</dbReference>
<dbReference type="RefSeq" id="XP_001697224.1">
    <property type="nucleotide sequence ID" value="XM_001697172.1"/>
</dbReference>
<dbReference type="PDB" id="4LVP">
    <property type="method" value="X-ray"/>
    <property type="resolution" value="2.32 A"/>
    <property type="chains" value="A=1-126"/>
</dbReference>
<dbReference type="PDB" id="4LVR">
    <property type="method" value="X-ray"/>
    <property type="resolution" value="2.60 A"/>
    <property type="chains" value="A=1-124"/>
</dbReference>
<dbReference type="PDB" id="8BD7">
    <property type="method" value="EM"/>
    <property type="resolution" value="9.90 A"/>
    <property type="chains" value="F/P=1-683"/>
</dbReference>
<dbReference type="PDB" id="8RUY">
    <property type="method" value="EM"/>
    <property type="resolution" value="15.40 A"/>
    <property type="chains" value="P=1-683"/>
</dbReference>
<dbReference type="PDBsum" id="4LVP"/>
<dbReference type="PDBsum" id="4LVR"/>
<dbReference type="PDBsum" id="8BD7"/>
<dbReference type="PDBsum" id="8RUY"/>
<dbReference type="EMDB" id="EMD-15977"/>
<dbReference type="EMDB" id="EMD-19515"/>
<dbReference type="SMR" id="Q68RJ5"/>
<dbReference type="IntAct" id="Q68RJ5">
    <property type="interactions" value="2"/>
</dbReference>
<dbReference type="PaxDb" id="3055-EDP00479"/>
<dbReference type="EnsemblPlants" id="PNW70526">
    <property type="protein sequence ID" value="PNW70526"/>
    <property type="gene ID" value="CHLRE_17g723600v5"/>
</dbReference>
<dbReference type="GeneID" id="5722735"/>
<dbReference type="Gramene" id="PNW70526">
    <property type="protein sequence ID" value="PNW70526"/>
    <property type="gene ID" value="CHLRE_17g723600v5"/>
</dbReference>
<dbReference type="KEGG" id="cre:CHLRE_17g723600v5"/>
<dbReference type="eggNOG" id="ENOG502QSBR">
    <property type="taxonomic scope" value="Eukaryota"/>
</dbReference>
<dbReference type="HOGENOM" id="CLU_017012_1_0_1"/>
<dbReference type="OMA" id="WILTHME"/>
<dbReference type="OrthoDB" id="276029at2759"/>
<dbReference type="EvolutionaryTrace" id="Q68RJ5"/>
<dbReference type="GO" id="GO:0045177">
    <property type="term" value="C:apical part of cell"/>
    <property type="evidence" value="ECO:0000314"/>
    <property type="project" value="BHF-UCL"/>
</dbReference>
<dbReference type="GO" id="GO:0030992">
    <property type="term" value="C:intraciliary transport particle B"/>
    <property type="evidence" value="ECO:0000314"/>
    <property type="project" value="UniProtKB"/>
</dbReference>
<dbReference type="GO" id="GO:0031514">
    <property type="term" value="C:motile cilium"/>
    <property type="evidence" value="ECO:0000314"/>
    <property type="project" value="BHF-UCL"/>
</dbReference>
<dbReference type="GO" id="GO:0015631">
    <property type="term" value="F:tubulin binding"/>
    <property type="evidence" value="ECO:0000314"/>
    <property type="project" value="UniProtKB"/>
</dbReference>
<dbReference type="GO" id="GO:0060271">
    <property type="term" value="P:cilium assembly"/>
    <property type="evidence" value="ECO:0000315"/>
    <property type="project" value="UniProtKB"/>
</dbReference>
<dbReference type="GO" id="GO:0035735">
    <property type="term" value="P:intraciliary transport involved in cilium assembly"/>
    <property type="evidence" value="ECO:0000315"/>
    <property type="project" value="UniProtKB"/>
</dbReference>
<dbReference type="Gene3D" id="1.10.418.70">
    <property type="entry name" value="Intraflagellar transport protein 81, N-terminal domain"/>
    <property type="match status" value="1"/>
</dbReference>
<dbReference type="InterPro" id="IPR029600">
    <property type="entry name" value="IFT81"/>
</dbReference>
<dbReference type="InterPro" id="IPR041146">
    <property type="entry name" value="IFT81_CH"/>
</dbReference>
<dbReference type="InterPro" id="IPR043016">
    <property type="entry name" value="IFT81_N_sf"/>
</dbReference>
<dbReference type="PANTHER" id="PTHR15614">
    <property type="entry name" value="INTRAFLAGELLAR TRANSPORT PROTEIN 81 HOMOLOG"/>
    <property type="match status" value="1"/>
</dbReference>
<dbReference type="PANTHER" id="PTHR15614:SF2">
    <property type="entry name" value="INTRAFLAGELLAR TRANSPORT PROTEIN 81 HOMOLOG"/>
    <property type="match status" value="1"/>
</dbReference>
<dbReference type="Pfam" id="PF18383">
    <property type="entry name" value="IFT81_CH"/>
    <property type="match status" value="1"/>
</dbReference>
<comment type="function">
    <text evidence="3">Component of the intraflagellar transport (IFT) complex B: together with IFT74, forms a tubulin-binding module that specifically mediates transport of tubulin within the cilium. Binds tubulin via its CH (calponin-homology)-like region. Required for ciliogenesis.</text>
</comment>
<comment type="subunit">
    <text evidence="2 3">Component of the IFT complex B, the core composed of IFT25, IFT27, IFT46, IFT52, IFT74, IFT81 and IFT88 as well as associated subunits IFT20, IFT57, IFT80 and IFT172. Interacts with IFT81; the interaction is direct: within the IFT complex B, IFT74 and IFT81 mediate the transport of tubulin within the cilium. Interacts with tubulin; interaction is direct.</text>
</comment>
<comment type="interaction">
    <interactant intactId="EBI-958528">
        <id>Q68RJ5</id>
    </interactant>
    <interactant intactId="EBI-958534">
        <id>Q68K27</id>
        <label>IFT140</label>
    </interactant>
    <organismsDiffer>false</organismsDiffer>
    <experiments>2</experiments>
</comment>
<comment type="subcellular location">
    <subcellularLocation>
        <location evidence="5">Cell projection</location>
        <location evidence="5">Cilium</location>
    </subcellularLocation>
</comment>
<comment type="domain">
    <text evidence="3">The CH (calponin-homology)-like region shows high similarity to a CH (calponin-homology) domain and mediates binding to the globular domain of tubulin.</text>
</comment>
<comment type="similarity">
    <text evidence="4">Belongs to the IFT81 family.</text>
</comment>
<feature type="chain" id="PRO_0000424814" description="Intraflagellar transport protein 81">
    <location>
        <begin position="1"/>
        <end position="683"/>
    </location>
</feature>
<feature type="region of interest" description="CH (calponin-homology)-like region">
    <location>
        <begin position="1"/>
        <end position="122"/>
    </location>
</feature>
<feature type="coiled-coil region" evidence="1">
    <location>
        <begin position="134"/>
        <end position="387"/>
    </location>
</feature>
<feature type="coiled-coil region" evidence="1">
    <location>
        <begin position="587"/>
        <end position="618"/>
    </location>
</feature>
<feature type="helix" evidence="6">
    <location>
        <begin position="1"/>
        <end position="11"/>
    </location>
</feature>
<feature type="turn" evidence="6">
    <location>
        <begin position="14"/>
        <end position="16"/>
    </location>
</feature>
<feature type="helix" evidence="6">
    <location>
        <begin position="22"/>
        <end position="26"/>
    </location>
</feature>
<feature type="helix" evidence="6">
    <location>
        <begin position="30"/>
        <end position="44"/>
    </location>
</feature>
<feature type="helix" evidence="6">
    <location>
        <begin position="53"/>
        <end position="55"/>
    </location>
</feature>
<feature type="helix" evidence="6">
    <location>
        <begin position="58"/>
        <end position="71"/>
    </location>
</feature>
<feature type="helix" evidence="6">
    <location>
        <begin position="81"/>
        <end position="90"/>
    </location>
</feature>
<feature type="helix" evidence="6">
    <location>
        <begin position="93"/>
        <end position="103"/>
    </location>
</feature>
<feature type="helix" evidence="6">
    <location>
        <begin position="107"/>
        <end position="114"/>
    </location>
</feature>
<feature type="turn" evidence="6">
    <location>
        <begin position="116"/>
        <end position="118"/>
    </location>
</feature>
<reference key="1">
    <citation type="journal article" date="2005" name="J. Biol. Chem.">
        <title>Characterization of the intraflagellar transport complex B core: direct interaction of the IFT81 and IFT74/72 subunits.</title>
        <authorList>
            <person name="Lucker B.F."/>
            <person name="Behal R.H."/>
            <person name="Qin H."/>
            <person name="Siron L.C."/>
            <person name="Taggart W.D."/>
            <person name="Rosenbaum J.L."/>
            <person name="Cole D.G."/>
        </authorList>
    </citation>
    <scope>NUCLEOTIDE SEQUENCE [MRNA]</scope>
    <scope>IDENTIFICATION IN THE IFT COMPLEX B</scope>
</reference>
<reference key="2">
    <citation type="journal article" date="2007" name="Science">
        <title>The Chlamydomonas genome reveals the evolution of key animal and plant functions.</title>
        <authorList>
            <person name="Merchant S.S."/>
            <person name="Prochnik S.E."/>
            <person name="Vallon O."/>
            <person name="Harris E.H."/>
            <person name="Karpowicz S.J."/>
            <person name="Witman G.B."/>
            <person name="Terry A."/>
            <person name="Salamov A."/>
            <person name="Fritz-Laylin L.K."/>
            <person name="Marechal-Drouard L."/>
            <person name="Marshall W.F."/>
            <person name="Qu L.H."/>
            <person name="Nelson D.R."/>
            <person name="Sanderfoot A.A."/>
            <person name="Spalding M.H."/>
            <person name="Kapitonov V.V."/>
            <person name="Ren Q."/>
            <person name="Ferris P."/>
            <person name="Lindquist E."/>
            <person name="Shapiro H."/>
            <person name="Lucas S.M."/>
            <person name="Grimwood J."/>
            <person name="Schmutz J."/>
            <person name="Cardol P."/>
            <person name="Cerutti H."/>
            <person name="Chanfreau G."/>
            <person name="Chen C.L."/>
            <person name="Cognat V."/>
            <person name="Croft M.T."/>
            <person name="Dent R."/>
            <person name="Dutcher S."/>
            <person name="Fernandez E."/>
            <person name="Fukuzawa H."/>
            <person name="Gonzalez-Ballester D."/>
            <person name="Gonzalez-Halphen D."/>
            <person name="Hallmann A."/>
            <person name="Hanikenne M."/>
            <person name="Hippler M."/>
            <person name="Inwood W."/>
            <person name="Jabbari K."/>
            <person name="Kalanon M."/>
            <person name="Kuras R."/>
            <person name="Lefebvre P.A."/>
            <person name="Lemaire S.D."/>
            <person name="Lobanov A.V."/>
            <person name="Lohr M."/>
            <person name="Manuell A."/>
            <person name="Meier I."/>
            <person name="Mets L."/>
            <person name="Mittag M."/>
            <person name="Mittelmeier T."/>
            <person name="Moroney J.V."/>
            <person name="Moseley J."/>
            <person name="Napoli C."/>
            <person name="Nedelcu A.M."/>
            <person name="Niyogi K."/>
            <person name="Novoselov S.V."/>
            <person name="Paulsen I.T."/>
            <person name="Pazour G.J."/>
            <person name="Purton S."/>
            <person name="Ral J.P."/>
            <person name="Riano-Pachon D.M."/>
            <person name="Riekhof W."/>
            <person name="Rymarquis L."/>
            <person name="Schroda M."/>
            <person name="Stern D."/>
            <person name="Umen J."/>
            <person name="Willows R."/>
            <person name="Wilson N."/>
            <person name="Zimmer S.L."/>
            <person name="Allmer J."/>
            <person name="Balk J."/>
            <person name="Bisova K."/>
            <person name="Chen C.J."/>
            <person name="Elias M."/>
            <person name="Gendler K."/>
            <person name="Hauser C."/>
            <person name="Lamb M.R."/>
            <person name="Ledford H."/>
            <person name="Long J.C."/>
            <person name="Minagawa J."/>
            <person name="Page M.D."/>
            <person name="Pan J."/>
            <person name="Pootakham W."/>
            <person name="Roje S."/>
            <person name="Rose A."/>
            <person name="Stahlberg E."/>
            <person name="Terauchi A.M."/>
            <person name="Yang P."/>
            <person name="Ball S."/>
            <person name="Bowler C."/>
            <person name="Dieckmann C.L."/>
            <person name="Gladyshev V.N."/>
            <person name="Green P."/>
            <person name="Jorgensen R."/>
            <person name="Mayfield S."/>
            <person name="Mueller-Roeber B."/>
            <person name="Rajamani S."/>
            <person name="Sayre R.T."/>
            <person name="Brokstein P."/>
            <person name="Dubchak I."/>
            <person name="Goodstein D."/>
            <person name="Hornick L."/>
            <person name="Huang Y.W."/>
            <person name="Jhaveri J."/>
            <person name="Luo Y."/>
            <person name="Martinez D."/>
            <person name="Ngau W.C."/>
            <person name="Otillar B."/>
            <person name="Poliakov A."/>
            <person name="Porter A."/>
            <person name="Szajkowski L."/>
            <person name="Werner G."/>
            <person name="Zhou K."/>
            <person name="Grigoriev I.V."/>
            <person name="Rokhsar D.S."/>
            <person name="Grossman A.R."/>
        </authorList>
    </citation>
    <scope>NUCLEOTIDE SEQUENCE [LARGE SCALE GENOMIC DNA]</scope>
    <source>
        <strain>CC-503</strain>
    </source>
</reference>
<reference key="3">
    <citation type="journal article" date="2013" name="Science">
        <title>Molecular basis of tubulin transport within the cilium by IFT74 and IFT81.</title>
        <authorList>
            <person name="Bhogaraju S."/>
            <person name="Cajanek L."/>
            <person name="Fort C."/>
            <person name="Blisnick T."/>
            <person name="Weber K."/>
            <person name="Taschner M."/>
            <person name="Mizuno N."/>
            <person name="Lamla S."/>
            <person name="Bastin P."/>
            <person name="Nigg E.A."/>
            <person name="Lorentzen E."/>
        </authorList>
    </citation>
    <scope>X-RAY CRYSTALLOGRAPHY (2.2 ANGSTROMS) OF 1-225</scope>
    <scope>FUNCTION</scope>
    <scope>SUBCELLULAR LOCATION</scope>
    <scope>IDENTIFICATION IN THE IFT COMPLEX B</scope>
    <scope>INTERACTION WITH TUBULIN AND IFT74</scope>
</reference>
<protein>
    <recommendedName>
        <fullName>Intraflagellar transport protein 81</fullName>
    </recommendedName>
</protein>
<organism>
    <name type="scientific">Chlamydomonas reinhardtii</name>
    <name type="common">Chlamydomonas smithii</name>
    <dbReference type="NCBI Taxonomy" id="3055"/>
    <lineage>
        <taxon>Eukaryota</taxon>
        <taxon>Viridiplantae</taxon>
        <taxon>Chlorophyta</taxon>
        <taxon>core chlorophytes</taxon>
        <taxon>Chlorophyceae</taxon>
        <taxon>CS clade</taxon>
        <taxon>Chlamydomonadales</taxon>
        <taxon>Chlamydomonadaceae</taxon>
        <taxon>Chlamydomonas</taxon>
    </lineage>
</organism>
<evidence type="ECO:0000255" key="1"/>
<evidence type="ECO:0000269" key="2">
    <source>
    </source>
</evidence>
<evidence type="ECO:0000269" key="3">
    <source>
    </source>
</evidence>
<evidence type="ECO:0000305" key="4"/>
<evidence type="ECO:0000305" key="5">
    <source>
    </source>
</evidence>
<evidence type="ECO:0007829" key="6">
    <source>
        <dbReference type="PDB" id="4LVP"/>
    </source>
</evidence>